<comment type="function">
    <text evidence="1">Bidirectionally degrades single-stranded DNA into large acid-insoluble oligonucleotides, which are then degraded further into small acid-soluble oligonucleotides.</text>
</comment>
<comment type="catalytic activity">
    <reaction evidence="1">
        <text>Exonucleolytic cleavage in either 5'- to 3'- or 3'- to 5'-direction to yield nucleoside 5'-phosphates.</text>
        <dbReference type="EC" id="3.1.11.6"/>
    </reaction>
</comment>
<comment type="subunit">
    <text evidence="1">Heterooligomer composed of large and small subunits.</text>
</comment>
<comment type="subcellular location">
    <subcellularLocation>
        <location evidence="1">Cytoplasm</location>
    </subcellularLocation>
</comment>
<comment type="similarity">
    <text evidence="1">Belongs to the XseA family.</text>
</comment>
<sequence length="401" mass="45467">MHIKTLTVSQLNRYVKNTLDADFILNNASVKGEISNLKIHSSGHIYFSLKDGGSKINCVMFKSYAYNLKFAPENGMDVVALGNVSVYEKEGSYQLYVKDMKREGIGDLYVAFEKLKEKLKEEGLFDDVHKKEIPKFSKKVGVITSPTGAALKDIINVTKRRNKGIELLIYPALVQGTDASRTLIEGIKILNKVEDVDIIILARGGGSIEELWAFNNEELAYAVYNSKKPIITGVGHETDFTIVDFVSDRRAPTPSAAAEIAVFDREVLINEILNYKYNIKNYMENIIKEKRNYLNLYKQKIEANSPTNIIVNEYKNIDNLKELLNMKIEGKLNKEKNNLSRLSSLLEAHNPLNVLKKGYTLIEDEGNNLITEKEALKELNKINIIFKDGRAKLSIEYIEEF</sequence>
<keyword id="KW-0963">Cytoplasm</keyword>
<keyword id="KW-0269">Exonuclease</keyword>
<keyword id="KW-0378">Hydrolase</keyword>
<keyword id="KW-0540">Nuclease</keyword>
<keyword id="KW-1185">Reference proteome</keyword>
<protein>
    <recommendedName>
        <fullName evidence="1">Exodeoxyribonuclease 7 large subunit</fullName>
        <ecNumber evidence="1">3.1.11.6</ecNumber>
    </recommendedName>
    <alternativeName>
        <fullName evidence="1">Exodeoxyribonuclease VII large subunit</fullName>
        <shortName evidence="1">Exonuclease VII large subunit</shortName>
    </alternativeName>
</protein>
<proteinExistence type="inferred from homology"/>
<accession>A5I309</accession>
<accession>A7G4G9</accession>
<dbReference type="EC" id="3.1.11.6" evidence="1"/>
<dbReference type="EMBL" id="CP000727">
    <property type="protein sequence ID" value="ABS37494.1"/>
    <property type="molecule type" value="Genomic_DNA"/>
</dbReference>
<dbReference type="EMBL" id="AM412317">
    <property type="protein sequence ID" value="CAL83426.1"/>
    <property type="molecule type" value="Genomic_DNA"/>
</dbReference>
<dbReference type="RefSeq" id="WP_003358983.1">
    <property type="nucleotide sequence ID" value="NC_009698.1"/>
</dbReference>
<dbReference type="RefSeq" id="YP_001254387.1">
    <property type="nucleotide sequence ID" value="NC_009495.1"/>
</dbReference>
<dbReference type="RefSeq" id="YP_001387684.1">
    <property type="nucleotide sequence ID" value="NC_009698.1"/>
</dbReference>
<dbReference type="SMR" id="A5I309"/>
<dbReference type="GeneID" id="5186140"/>
<dbReference type="KEGG" id="cbh:CLC_1829"/>
<dbReference type="KEGG" id="cbo:CBO1885"/>
<dbReference type="PATRIC" id="fig|413999.7.peg.1857"/>
<dbReference type="HOGENOM" id="CLU_023625_2_0_9"/>
<dbReference type="PRO" id="PR:A5I309"/>
<dbReference type="Proteomes" id="UP000001986">
    <property type="component" value="Chromosome"/>
</dbReference>
<dbReference type="GO" id="GO:0005737">
    <property type="term" value="C:cytoplasm"/>
    <property type="evidence" value="ECO:0007669"/>
    <property type="project" value="UniProtKB-SubCell"/>
</dbReference>
<dbReference type="GO" id="GO:0009318">
    <property type="term" value="C:exodeoxyribonuclease VII complex"/>
    <property type="evidence" value="ECO:0007669"/>
    <property type="project" value="InterPro"/>
</dbReference>
<dbReference type="GO" id="GO:0008855">
    <property type="term" value="F:exodeoxyribonuclease VII activity"/>
    <property type="evidence" value="ECO:0007669"/>
    <property type="project" value="UniProtKB-UniRule"/>
</dbReference>
<dbReference type="GO" id="GO:0003676">
    <property type="term" value="F:nucleic acid binding"/>
    <property type="evidence" value="ECO:0007669"/>
    <property type="project" value="InterPro"/>
</dbReference>
<dbReference type="GO" id="GO:0006308">
    <property type="term" value="P:DNA catabolic process"/>
    <property type="evidence" value="ECO:0007669"/>
    <property type="project" value="UniProtKB-UniRule"/>
</dbReference>
<dbReference type="CDD" id="cd04489">
    <property type="entry name" value="ExoVII_LU_OBF"/>
    <property type="match status" value="1"/>
</dbReference>
<dbReference type="HAMAP" id="MF_00378">
    <property type="entry name" value="Exonuc_7_L"/>
    <property type="match status" value="1"/>
</dbReference>
<dbReference type="InterPro" id="IPR003753">
    <property type="entry name" value="Exonuc_VII_L"/>
</dbReference>
<dbReference type="InterPro" id="IPR020579">
    <property type="entry name" value="Exonuc_VII_lsu_C"/>
</dbReference>
<dbReference type="InterPro" id="IPR025824">
    <property type="entry name" value="OB-fold_nuc-bd_dom"/>
</dbReference>
<dbReference type="NCBIfam" id="TIGR00237">
    <property type="entry name" value="xseA"/>
    <property type="match status" value="1"/>
</dbReference>
<dbReference type="PANTHER" id="PTHR30008">
    <property type="entry name" value="EXODEOXYRIBONUCLEASE 7 LARGE SUBUNIT"/>
    <property type="match status" value="1"/>
</dbReference>
<dbReference type="PANTHER" id="PTHR30008:SF0">
    <property type="entry name" value="EXODEOXYRIBONUCLEASE 7 LARGE SUBUNIT"/>
    <property type="match status" value="1"/>
</dbReference>
<dbReference type="Pfam" id="PF02601">
    <property type="entry name" value="Exonuc_VII_L"/>
    <property type="match status" value="2"/>
</dbReference>
<dbReference type="Pfam" id="PF13742">
    <property type="entry name" value="tRNA_anti_2"/>
    <property type="match status" value="1"/>
</dbReference>
<evidence type="ECO:0000255" key="1">
    <source>
        <dbReference type="HAMAP-Rule" id="MF_00378"/>
    </source>
</evidence>
<feature type="chain" id="PRO_1000048769" description="Exodeoxyribonuclease 7 large subunit">
    <location>
        <begin position="1"/>
        <end position="401"/>
    </location>
</feature>
<name>EX7L_CLOBH</name>
<gene>
    <name evidence="1" type="primary">xseA</name>
    <name type="ordered locus">CBO1885</name>
    <name type="ordered locus">CLC_1829</name>
</gene>
<reference key="1">
    <citation type="journal article" date="2007" name="Genome Res.">
        <title>Genome sequence of a proteolytic (Group I) Clostridium botulinum strain Hall A and comparative analysis of the clostridial genomes.</title>
        <authorList>
            <person name="Sebaihia M."/>
            <person name="Peck M.W."/>
            <person name="Minton N.P."/>
            <person name="Thomson N.R."/>
            <person name="Holden M.T.G."/>
            <person name="Mitchell W.J."/>
            <person name="Carter A.T."/>
            <person name="Bentley S.D."/>
            <person name="Mason D.R."/>
            <person name="Crossman L."/>
            <person name="Paul C.J."/>
            <person name="Ivens A."/>
            <person name="Wells-Bennik M.H.J."/>
            <person name="Davis I.J."/>
            <person name="Cerdeno-Tarraga A.M."/>
            <person name="Churcher C."/>
            <person name="Quail M.A."/>
            <person name="Chillingworth T."/>
            <person name="Feltwell T."/>
            <person name="Fraser A."/>
            <person name="Goodhead I."/>
            <person name="Hance Z."/>
            <person name="Jagels K."/>
            <person name="Larke N."/>
            <person name="Maddison M."/>
            <person name="Moule S."/>
            <person name="Mungall K."/>
            <person name="Norbertczak H."/>
            <person name="Rabbinowitsch E."/>
            <person name="Sanders M."/>
            <person name="Simmonds M."/>
            <person name="White B."/>
            <person name="Whithead S."/>
            <person name="Parkhill J."/>
        </authorList>
    </citation>
    <scope>NUCLEOTIDE SEQUENCE [LARGE SCALE GENOMIC DNA]</scope>
    <source>
        <strain>Hall / ATCC 3502 / NCTC 13319 / Type A</strain>
    </source>
</reference>
<reference key="2">
    <citation type="journal article" date="2007" name="PLoS ONE">
        <title>Analysis of the neurotoxin complex genes in Clostridium botulinum A1-A4 and B1 strains: BoNT/A3, /Ba4 and /B1 clusters are located within plasmids.</title>
        <authorList>
            <person name="Smith T.J."/>
            <person name="Hill K.K."/>
            <person name="Foley B.T."/>
            <person name="Detter J.C."/>
            <person name="Munk A.C."/>
            <person name="Bruce D.C."/>
            <person name="Doggett N.A."/>
            <person name="Smith L.A."/>
            <person name="Marks J.D."/>
            <person name="Xie G."/>
            <person name="Brettin T.S."/>
        </authorList>
    </citation>
    <scope>NUCLEOTIDE SEQUENCE [LARGE SCALE GENOMIC DNA]</scope>
    <source>
        <strain>Hall / ATCC 3502 / NCTC 13319 / Type A</strain>
    </source>
</reference>
<organism>
    <name type="scientific">Clostridium botulinum (strain Hall / ATCC 3502 / NCTC 13319 / Type A)</name>
    <dbReference type="NCBI Taxonomy" id="441771"/>
    <lineage>
        <taxon>Bacteria</taxon>
        <taxon>Bacillati</taxon>
        <taxon>Bacillota</taxon>
        <taxon>Clostridia</taxon>
        <taxon>Eubacteriales</taxon>
        <taxon>Clostridiaceae</taxon>
        <taxon>Clostridium</taxon>
    </lineage>
</organism>